<gene>
    <name evidence="1" type="primary">dsdA</name>
    <name type="ordered locus">BTH_II0245</name>
</gene>
<sequence length="444" mass="46455">MLMHDVRPLPLDPNLLAILQAGSPTLWLNPHQGEPLPDFAPTAADLAEAGARLHRCAGLLAELFPELRPLGGRIASPLQPAEPLKRADHAQAGAWFVKRDDALPVAGSIKARGGFHEVLALAESIAERHGLVSAGADRRALASGEAHALFARHTVMVGSTGNLGLSIGMLASALGFRTVVHMSADAKAWKRARLRTRGVDVVEHAGDYAKAVDAGRRQAAGMPRCHFVDDEGSRMLFLGYATAAAELAAQLAQAGRPVDARHPLFVHLPCGVGGAPGGIAYGLKARYGEHVHVFVAEPTASPCVLVQLASGGAHPVSVYDVGLDNRTEADGLAVAQASHLAGPLLRAQAAGVFTVDDRQLFAHLLDARERLGIDLEPSAAAAFGGPAWLAGSEAGRAYLRGRGIVPEAATHVIWATGGSLVPAEEHRRFQARACAQRRESGAGA</sequence>
<dbReference type="EC" id="4.3.1.18" evidence="1"/>
<dbReference type="EMBL" id="CP000085">
    <property type="protein sequence ID" value="ABC35346.1"/>
    <property type="molecule type" value="Genomic_DNA"/>
</dbReference>
<dbReference type="SMR" id="Q2T8Q2"/>
<dbReference type="KEGG" id="bte:BTH_II0245"/>
<dbReference type="HOGENOM" id="CLU_035707_0_0_4"/>
<dbReference type="Proteomes" id="UP000001930">
    <property type="component" value="Chromosome II"/>
</dbReference>
<dbReference type="GO" id="GO:0008721">
    <property type="term" value="F:D-serine ammonia-lyase activity"/>
    <property type="evidence" value="ECO:0007669"/>
    <property type="project" value="UniProtKB-EC"/>
</dbReference>
<dbReference type="GO" id="GO:0016836">
    <property type="term" value="F:hydro-lyase activity"/>
    <property type="evidence" value="ECO:0007669"/>
    <property type="project" value="UniProtKB-UniRule"/>
</dbReference>
<dbReference type="GO" id="GO:0030170">
    <property type="term" value="F:pyridoxal phosphate binding"/>
    <property type="evidence" value="ECO:0007669"/>
    <property type="project" value="InterPro"/>
</dbReference>
<dbReference type="GO" id="GO:0036088">
    <property type="term" value="P:D-serine catabolic process"/>
    <property type="evidence" value="ECO:0007669"/>
    <property type="project" value="TreeGrafter"/>
</dbReference>
<dbReference type="GO" id="GO:0009097">
    <property type="term" value="P:isoleucine biosynthetic process"/>
    <property type="evidence" value="ECO:0007669"/>
    <property type="project" value="TreeGrafter"/>
</dbReference>
<dbReference type="Gene3D" id="3.40.50.1100">
    <property type="match status" value="2"/>
</dbReference>
<dbReference type="HAMAP" id="MF_01030">
    <property type="entry name" value="D_Ser_dehydrat"/>
    <property type="match status" value="1"/>
</dbReference>
<dbReference type="InterPro" id="IPR011780">
    <property type="entry name" value="D_Ser_am_lyase"/>
</dbReference>
<dbReference type="InterPro" id="IPR050147">
    <property type="entry name" value="Ser/Thr_Dehydratase"/>
</dbReference>
<dbReference type="InterPro" id="IPR001926">
    <property type="entry name" value="TrpB-like_PALP"/>
</dbReference>
<dbReference type="InterPro" id="IPR036052">
    <property type="entry name" value="TrpB-like_PALP_sf"/>
</dbReference>
<dbReference type="NCBIfam" id="TIGR02035">
    <property type="entry name" value="D_Ser_am_lyase"/>
    <property type="match status" value="1"/>
</dbReference>
<dbReference type="NCBIfam" id="NF002823">
    <property type="entry name" value="PRK02991.1"/>
    <property type="match status" value="1"/>
</dbReference>
<dbReference type="PANTHER" id="PTHR48078:SF9">
    <property type="entry name" value="D-SERINE DEHYDRATASE"/>
    <property type="match status" value="1"/>
</dbReference>
<dbReference type="PANTHER" id="PTHR48078">
    <property type="entry name" value="THREONINE DEHYDRATASE, MITOCHONDRIAL-RELATED"/>
    <property type="match status" value="1"/>
</dbReference>
<dbReference type="Pfam" id="PF00291">
    <property type="entry name" value="PALP"/>
    <property type="match status" value="1"/>
</dbReference>
<dbReference type="SUPFAM" id="SSF53686">
    <property type="entry name" value="Tryptophan synthase beta subunit-like PLP-dependent enzymes"/>
    <property type="match status" value="1"/>
</dbReference>
<feature type="chain" id="PRO_0000291722" description="Probable D-serine dehydratase">
    <location>
        <begin position="1"/>
        <end position="444"/>
    </location>
</feature>
<feature type="modified residue" description="N6-(pyridoxal phosphate)lysine" evidence="1">
    <location>
        <position position="110"/>
    </location>
</feature>
<proteinExistence type="inferred from homology"/>
<evidence type="ECO:0000255" key="1">
    <source>
        <dbReference type="HAMAP-Rule" id="MF_01030"/>
    </source>
</evidence>
<organism>
    <name type="scientific">Burkholderia thailandensis (strain ATCC 700388 / DSM 13276 / CCUG 48851 / CIP 106301 / E264)</name>
    <dbReference type="NCBI Taxonomy" id="271848"/>
    <lineage>
        <taxon>Bacteria</taxon>
        <taxon>Pseudomonadati</taxon>
        <taxon>Pseudomonadota</taxon>
        <taxon>Betaproteobacteria</taxon>
        <taxon>Burkholderiales</taxon>
        <taxon>Burkholderiaceae</taxon>
        <taxon>Burkholderia</taxon>
        <taxon>pseudomallei group</taxon>
    </lineage>
</organism>
<accession>Q2T8Q2</accession>
<keyword id="KW-0456">Lyase</keyword>
<keyword id="KW-0663">Pyridoxal phosphate</keyword>
<protein>
    <recommendedName>
        <fullName evidence="1">Probable D-serine dehydratase</fullName>
        <ecNumber evidence="1">4.3.1.18</ecNumber>
    </recommendedName>
    <alternativeName>
        <fullName evidence="1">D-serine deaminase</fullName>
        <shortName evidence="1">DSD</shortName>
    </alternativeName>
</protein>
<comment type="catalytic activity">
    <reaction evidence="1">
        <text>D-serine = pyruvate + NH4(+)</text>
        <dbReference type="Rhea" id="RHEA:13977"/>
        <dbReference type="ChEBI" id="CHEBI:15361"/>
        <dbReference type="ChEBI" id="CHEBI:28938"/>
        <dbReference type="ChEBI" id="CHEBI:35247"/>
        <dbReference type="EC" id="4.3.1.18"/>
    </reaction>
</comment>
<comment type="cofactor">
    <cofactor evidence="1">
        <name>pyridoxal 5'-phosphate</name>
        <dbReference type="ChEBI" id="CHEBI:597326"/>
    </cofactor>
</comment>
<comment type="similarity">
    <text evidence="1">Belongs to the serine/threonine dehydratase family. DsdA subfamily.</text>
</comment>
<reference key="1">
    <citation type="journal article" date="2005" name="BMC Genomics">
        <title>Bacterial genome adaptation to niches: divergence of the potential virulence genes in three Burkholderia species of different survival strategies.</title>
        <authorList>
            <person name="Kim H.S."/>
            <person name="Schell M.A."/>
            <person name="Yu Y."/>
            <person name="Ulrich R.L."/>
            <person name="Sarria S.H."/>
            <person name="Nierman W.C."/>
            <person name="DeShazer D."/>
        </authorList>
    </citation>
    <scope>NUCLEOTIDE SEQUENCE [LARGE SCALE GENOMIC DNA]</scope>
    <source>
        <strain>ATCC 700388 / DSM 13276 / CCUG 48851 / CIP 106301 / E264</strain>
    </source>
</reference>
<name>SDHD_BURTA</name>